<organism>
    <name type="scientific">Rhizobium meliloti (strain 1021)</name>
    <name type="common">Ensifer meliloti</name>
    <name type="synonym">Sinorhizobium meliloti</name>
    <dbReference type="NCBI Taxonomy" id="266834"/>
    <lineage>
        <taxon>Bacteria</taxon>
        <taxon>Pseudomonadati</taxon>
        <taxon>Pseudomonadota</taxon>
        <taxon>Alphaproteobacteria</taxon>
        <taxon>Hyphomicrobiales</taxon>
        <taxon>Rhizobiaceae</taxon>
        <taxon>Sinorhizobium/Ensifer group</taxon>
        <taxon>Sinorhizobium</taxon>
    </lineage>
</organism>
<reference key="1">
    <citation type="submission" date="1993-03" db="EMBL/GenBank/DDBJ databases">
        <authorList>
            <person name="Kahn D."/>
            <person name="Daveran-Mingot M.-L."/>
        </authorList>
    </citation>
    <scope>NUCLEOTIDE SEQUENCE [GENOMIC DNA]</scope>
    <source>
        <strain>RCR2011 / SU47</strain>
    </source>
</reference>
<reference key="2">
    <citation type="journal article" date="2001" name="Proc. Natl. Acad. Sci. U.S.A.">
        <title>Nucleotide sequence and predicted functions of the entire Sinorhizobium meliloti pSymA megaplasmid.</title>
        <authorList>
            <person name="Barnett M.J."/>
            <person name="Fisher R.F."/>
            <person name="Jones T."/>
            <person name="Komp C."/>
            <person name="Abola A.P."/>
            <person name="Barloy-Hubler F."/>
            <person name="Bowser L."/>
            <person name="Capela D."/>
            <person name="Galibert F."/>
            <person name="Gouzy J."/>
            <person name="Gurjal M."/>
            <person name="Hong A."/>
            <person name="Huizar L."/>
            <person name="Hyman R.W."/>
            <person name="Kahn D."/>
            <person name="Kahn M.L."/>
            <person name="Kalman S."/>
            <person name="Keating D.H."/>
            <person name="Palm C."/>
            <person name="Peck M.C."/>
            <person name="Surzycki R."/>
            <person name="Wells D.H."/>
            <person name="Yeh K.-C."/>
            <person name="Davis R.W."/>
            <person name="Federspiel N.A."/>
            <person name="Long S.R."/>
        </authorList>
    </citation>
    <scope>NUCLEOTIDE SEQUENCE [LARGE SCALE GENOMIC DNA]</scope>
    <source>
        <strain>1021</strain>
    </source>
</reference>
<reference key="3">
    <citation type="journal article" date="2001" name="Science">
        <title>The composite genome of the legume symbiont Sinorhizobium meliloti.</title>
        <authorList>
            <person name="Galibert F."/>
            <person name="Finan T.M."/>
            <person name="Long S.R."/>
            <person name="Puehler A."/>
            <person name="Abola P."/>
            <person name="Ampe F."/>
            <person name="Barloy-Hubler F."/>
            <person name="Barnett M.J."/>
            <person name="Becker A."/>
            <person name="Boistard P."/>
            <person name="Bothe G."/>
            <person name="Boutry M."/>
            <person name="Bowser L."/>
            <person name="Buhrmester J."/>
            <person name="Cadieu E."/>
            <person name="Capela D."/>
            <person name="Chain P."/>
            <person name="Cowie A."/>
            <person name="Davis R.W."/>
            <person name="Dreano S."/>
            <person name="Federspiel N.A."/>
            <person name="Fisher R.F."/>
            <person name="Gloux S."/>
            <person name="Godrie T."/>
            <person name="Goffeau A."/>
            <person name="Golding B."/>
            <person name="Gouzy J."/>
            <person name="Gurjal M."/>
            <person name="Hernandez-Lucas I."/>
            <person name="Hong A."/>
            <person name="Huizar L."/>
            <person name="Hyman R.W."/>
            <person name="Jones T."/>
            <person name="Kahn D."/>
            <person name="Kahn M.L."/>
            <person name="Kalman S."/>
            <person name="Keating D.H."/>
            <person name="Kiss E."/>
            <person name="Komp C."/>
            <person name="Lelaure V."/>
            <person name="Masuy D."/>
            <person name="Palm C."/>
            <person name="Peck M.C."/>
            <person name="Pohl T.M."/>
            <person name="Portetelle D."/>
            <person name="Purnelle B."/>
            <person name="Ramsperger U."/>
            <person name="Surzycki R."/>
            <person name="Thebault P."/>
            <person name="Vandenbol M."/>
            <person name="Vorhoelter F.J."/>
            <person name="Weidner S."/>
            <person name="Wells D.H."/>
            <person name="Wong K."/>
            <person name="Yeh K.-C."/>
            <person name="Batut J."/>
        </authorList>
    </citation>
    <scope>NUCLEOTIDE SEQUENCE [LARGE SCALE GENOMIC DNA]</scope>
    <source>
        <strain>1021</strain>
    </source>
</reference>
<feature type="chain" id="PRO_0000183470" description="Cytochrome c oxidase subunit 1 homolog, bacteroid">
    <location>
        <begin position="1"/>
        <end position="539"/>
    </location>
</feature>
<feature type="transmembrane region" description="Helical" evidence="2">
    <location>
        <begin position="4"/>
        <end position="24"/>
    </location>
</feature>
<feature type="transmembrane region" description="Helical" evidence="2">
    <location>
        <begin position="28"/>
        <end position="48"/>
    </location>
</feature>
<feature type="transmembrane region" description="Helical" evidence="2">
    <location>
        <begin position="75"/>
        <end position="95"/>
    </location>
</feature>
<feature type="transmembrane region" description="Helical" evidence="2">
    <location>
        <begin position="118"/>
        <end position="138"/>
    </location>
</feature>
<feature type="transmembrane region" description="Helical" evidence="2">
    <location>
        <begin position="154"/>
        <end position="174"/>
    </location>
</feature>
<feature type="transmembrane region" description="Helical" evidence="2">
    <location>
        <begin position="187"/>
        <end position="207"/>
    </location>
</feature>
<feature type="transmembrane region" description="Helical" evidence="2">
    <location>
        <begin position="214"/>
        <end position="234"/>
    </location>
</feature>
<feature type="transmembrane region" description="Helical" evidence="2">
    <location>
        <begin position="265"/>
        <end position="285"/>
    </location>
</feature>
<feature type="transmembrane region" description="Helical" evidence="2">
    <location>
        <begin position="298"/>
        <end position="318"/>
    </location>
</feature>
<feature type="transmembrane region" description="Helical" evidence="2">
    <location>
        <begin position="330"/>
        <end position="350"/>
    </location>
</feature>
<feature type="transmembrane region" description="Helical" evidence="2">
    <location>
        <begin position="368"/>
        <end position="388"/>
    </location>
</feature>
<feature type="transmembrane region" description="Helical" evidence="2">
    <location>
        <begin position="405"/>
        <end position="425"/>
    </location>
</feature>
<feature type="transmembrane region" description="Helical" evidence="2">
    <location>
        <begin position="443"/>
        <end position="463"/>
    </location>
</feature>
<feature type="transmembrane region" description="Helical" evidence="2">
    <location>
        <begin position="475"/>
        <end position="495"/>
    </location>
</feature>
<feature type="transmembrane region" description="Helical" evidence="2">
    <location>
        <begin position="499"/>
        <end position="519"/>
    </location>
</feature>
<feature type="binding site" description="axial binding residue" evidence="1">
    <location>
        <position position="117"/>
    </location>
    <ligand>
        <name>heme b</name>
        <dbReference type="ChEBI" id="CHEBI:60344"/>
        <label>1; low-spin</label>
    </ligand>
    <ligandPart>
        <name>Fe</name>
        <dbReference type="ChEBI" id="CHEBI:18248"/>
    </ligandPart>
</feature>
<feature type="binding site" evidence="1">
    <location>
        <position position="266"/>
    </location>
    <ligand>
        <name>Cu cation</name>
        <dbReference type="ChEBI" id="CHEBI:23378"/>
        <label>B</label>
    </ligand>
</feature>
<feature type="binding site" evidence="1">
    <location>
        <position position="316"/>
    </location>
    <ligand>
        <name>Cu cation</name>
        <dbReference type="ChEBI" id="CHEBI:23378"/>
        <label>B</label>
    </ligand>
</feature>
<feature type="binding site" evidence="1">
    <location>
        <position position="317"/>
    </location>
    <ligand>
        <name>Cu cation</name>
        <dbReference type="ChEBI" id="CHEBI:23378"/>
        <label>B</label>
    </ligand>
</feature>
<feature type="binding site" description="axial binding residue" evidence="1">
    <location>
        <position position="404"/>
    </location>
    <ligand>
        <name>heme b</name>
        <dbReference type="ChEBI" id="CHEBI:60344"/>
        <label>2; high-spin</label>
    </ligand>
    <ligandPart>
        <name>Fe</name>
        <dbReference type="ChEBI" id="CHEBI:18248"/>
    </ligandPart>
</feature>
<feature type="binding site" description="axial binding residue" evidence="1">
    <location>
        <position position="406"/>
    </location>
    <ligand>
        <name>heme b</name>
        <dbReference type="ChEBI" id="CHEBI:60344"/>
        <label>1; low-spin</label>
    </ligand>
    <ligandPart>
        <name>Fe</name>
        <dbReference type="ChEBI" id="CHEBI:18248"/>
    </ligandPart>
</feature>
<proteinExistence type="evidence at transcript level"/>
<geneLocation type="plasmid">
    <name>pSymA</name>
    <name>megaplasmid 1</name>
</geneLocation>
<protein>
    <recommendedName>
        <fullName>Cytochrome c oxidase subunit 1 homolog, bacteroid</fullName>
        <ecNumber>7.1.1.9</ecNumber>
    </recommendedName>
    <alternativeName>
        <fullName>Cytochrome CBB3 subunit 1</fullName>
    </alternativeName>
    <alternativeName>
        <fullName>Cytochrome c oxidase polypeptide I homolog</fullName>
    </alternativeName>
    <alternativeName>
        <fullName>Heme B/copper cytochrome c oxidase subunit</fullName>
    </alternativeName>
</protein>
<evidence type="ECO:0000250" key="1">
    <source>
        <dbReference type="UniProtKB" id="D9IA43"/>
    </source>
</evidence>
<evidence type="ECO:0000255" key="2"/>
<evidence type="ECO:0000305" key="3"/>
<gene>
    <name type="primary">fixN</name>
    <name type="ordered locus">RA0665</name>
    <name type="ORF">SMa1220</name>
</gene>
<accession>Q05572</accession>
<dbReference type="EC" id="7.1.1.9"/>
<dbReference type="EMBL" id="Z21854">
    <property type="protein sequence ID" value="CAA79901.1"/>
    <property type="molecule type" value="Genomic_DNA"/>
</dbReference>
<dbReference type="EMBL" id="AE006469">
    <property type="protein sequence ID" value="AAK65323.1"/>
    <property type="molecule type" value="Genomic_DNA"/>
</dbReference>
<dbReference type="PIR" id="A95345">
    <property type="entry name" value="A95345"/>
</dbReference>
<dbReference type="PIR" id="S39988">
    <property type="entry name" value="S39988"/>
</dbReference>
<dbReference type="RefSeq" id="NP_435911.1">
    <property type="nucleotide sequence ID" value="NC_003037.1"/>
</dbReference>
<dbReference type="SMR" id="Q05572"/>
<dbReference type="EnsemblBacteria" id="AAK65323">
    <property type="protein sequence ID" value="AAK65323"/>
    <property type="gene ID" value="SMa1220"/>
</dbReference>
<dbReference type="KEGG" id="sme:SMa1220"/>
<dbReference type="PATRIC" id="fig|266834.11.peg.685"/>
<dbReference type="HOGENOM" id="CLU_017702_3_4_5"/>
<dbReference type="OrthoDB" id="9806838at2"/>
<dbReference type="UniPathway" id="UPA00705"/>
<dbReference type="PRO" id="PR:Q05572"/>
<dbReference type="Proteomes" id="UP000001976">
    <property type="component" value="Plasmid pSymA"/>
</dbReference>
<dbReference type="GO" id="GO:0005886">
    <property type="term" value="C:plasma membrane"/>
    <property type="evidence" value="ECO:0007669"/>
    <property type="project" value="UniProtKB-SubCell"/>
</dbReference>
<dbReference type="GO" id="GO:0004129">
    <property type="term" value="F:cytochrome-c oxidase activity"/>
    <property type="evidence" value="ECO:0007669"/>
    <property type="project" value="UniProtKB-EC"/>
</dbReference>
<dbReference type="GO" id="GO:0020037">
    <property type="term" value="F:heme binding"/>
    <property type="evidence" value="ECO:0007669"/>
    <property type="project" value="InterPro"/>
</dbReference>
<dbReference type="GO" id="GO:0046872">
    <property type="term" value="F:metal ion binding"/>
    <property type="evidence" value="ECO:0007669"/>
    <property type="project" value="UniProtKB-KW"/>
</dbReference>
<dbReference type="GO" id="GO:0015990">
    <property type="term" value="P:electron transport coupled proton transport"/>
    <property type="evidence" value="ECO:0007669"/>
    <property type="project" value="TreeGrafter"/>
</dbReference>
<dbReference type="GO" id="GO:0006119">
    <property type="term" value="P:oxidative phosphorylation"/>
    <property type="evidence" value="ECO:0007669"/>
    <property type="project" value="UniProtKB-UniPathway"/>
</dbReference>
<dbReference type="GO" id="GO:0022904">
    <property type="term" value="P:respiratory electron transport chain"/>
    <property type="evidence" value="ECO:0007669"/>
    <property type="project" value="TreeGrafter"/>
</dbReference>
<dbReference type="CDD" id="cd01661">
    <property type="entry name" value="cbb3_Oxidase_I"/>
    <property type="match status" value="1"/>
</dbReference>
<dbReference type="FunFam" id="1.20.210.10:FF:000005">
    <property type="entry name" value="Cytochrome c oxidase, cbb3-type, subunit I"/>
    <property type="match status" value="1"/>
</dbReference>
<dbReference type="Gene3D" id="1.20.210.10">
    <property type="entry name" value="Cytochrome c oxidase-like, subunit I domain"/>
    <property type="match status" value="1"/>
</dbReference>
<dbReference type="InterPro" id="IPR023616">
    <property type="entry name" value="Cyt_c_oxase-like_su1_dom"/>
</dbReference>
<dbReference type="InterPro" id="IPR036927">
    <property type="entry name" value="Cyt_c_oxase-like_su1_sf"/>
</dbReference>
<dbReference type="InterPro" id="IPR000883">
    <property type="entry name" value="Cyt_C_Oxase_1"/>
</dbReference>
<dbReference type="InterPro" id="IPR023615">
    <property type="entry name" value="Cyt_c_Oxase_su1_BS"/>
</dbReference>
<dbReference type="InterPro" id="IPR004677">
    <property type="entry name" value="Cyt_c_oxidase_cbb3_su1"/>
</dbReference>
<dbReference type="NCBIfam" id="TIGR00780">
    <property type="entry name" value="ccoN"/>
    <property type="match status" value="1"/>
</dbReference>
<dbReference type="PANTHER" id="PTHR10422">
    <property type="entry name" value="CYTOCHROME C OXIDASE SUBUNIT 1"/>
    <property type="match status" value="1"/>
</dbReference>
<dbReference type="PANTHER" id="PTHR10422:SF29">
    <property type="entry name" value="CYTOCHROME C OXIDASE SUBUNIT 1 HOMOLOG, BACTEROID"/>
    <property type="match status" value="1"/>
</dbReference>
<dbReference type="Pfam" id="PF00115">
    <property type="entry name" value="COX1"/>
    <property type="match status" value="1"/>
</dbReference>
<dbReference type="SUPFAM" id="SSF81442">
    <property type="entry name" value="Cytochrome c oxidase subunit I-like"/>
    <property type="match status" value="1"/>
</dbReference>
<dbReference type="PROSITE" id="PS50855">
    <property type="entry name" value="COX1"/>
    <property type="match status" value="1"/>
</dbReference>
<dbReference type="PROSITE" id="PS00077">
    <property type="entry name" value="COX1_CUB"/>
    <property type="match status" value="1"/>
</dbReference>
<sequence length="539" mass="60869">MKHTVEMVVLSVGAFLALVGAGLAQDRLFGAHMWVLFFALLAGTLVLMRRVDFRPAVAGHPGRRREYFDEVVKYGVVATVFWGVVGFLVGVVVALQLAFPELNVEPWFNFGRVRPLHTSAVIFAFGGNALIATSFYVVQRTSRARLFGGDLGWFVFWGYQLFIVLAASGYLLGITQSREYAEPEWYVDLWLTIVWVAYLVAFLGTIMKRKEPHIYVANWFYLAFIVTIAMLHVVNNLAVPVSFLGSKSYSAFSGVQDALTQWWYGHNAVGFFLTAGFLAMMYYFIPKQVNRPVYSYRLSIIHFWAIIFMYIWAGPHHLHYTALPDWAQTLGMVFSIMLWMPSWGGMINGLMTLSGAWDKIRTDPVVRMMVMAVAFYGMATFEGPMMSIKTVNSLSHYTDWTIGHVHSGALGWNGLITFGAIYYLVPKLWNRERLYSVRMVNWHFWLATLGIVVYAAVMWVAGIQQGLMWREYDDQGFLVYSFAETVAAMFPYYVMRAAGGALFLAGALLMAFNVTMTILGRVRDEEPIFGAAPLPAPAE</sequence>
<comment type="function">
    <text>Cytochrome c oxidase is the component of the respiratory chain that catalyzes the reduction of oxygen to water. Subunits 1-3 form the functional core of the enzyme complex. Co I is the catalytic subunit of the enzyme. Electrons originating in cytochrome c or a quinol are transferred to the bimetallic center formed by a high-spin heme and copper B.</text>
</comment>
<comment type="catalytic activity">
    <reaction>
        <text>4 Fe(II)-[cytochrome c] + O2 + 8 H(+)(in) = 4 Fe(III)-[cytochrome c] + 2 H2O + 4 H(+)(out)</text>
        <dbReference type="Rhea" id="RHEA:11436"/>
        <dbReference type="Rhea" id="RHEA-COMP:10350"/>
        <dbReference type="Rhea" id="RHEA-COMP:14399"/>
        <dbReference type="ChEBI" id="CHEBI:15377"/>
        <dbReference type="ChEBI" id="CHEBI:15378"/>
        <dbReference type="ChEBI" id="CHEBI:15379"/>
        <dbReference type="ChEBI" id="CHEBI:29033"/>
        <dbReference type="ChEBI" id="CHEBI:29034"/>
        <dbReference type="EC" id="7.1.1.9"/>
    </reaction>
</comment>
<comment type="cofactor">
    <cofactor evidence="1">
        <name>Cu(2+)</name>
        <dbReference type="ChEBI" id="CHEBI:29036"/>
    </cofactor>
    <text evidence="1">Binds 1 copper ion per subunit, denoted as copper B.</text>
</comment>
<comment type="cofactor">
    <cofactor evidence="1">
        <name>heme b</name>
        <dbReference type="ChEBI" id="CHEBI:60344"/>
    </cofactor>
    <text evidence="1">Binds 2 heme b groups per subunit, denoted as high- and low-spin.</text>
</comment>
<comment type="pathway">
    <text>Energy metabolism; oxidative phosphorylation.</text>
</comment>
<comment type="subcellular location">
    <subcellularLocation>
        <location>Cell membrane</location>
        <topology>Multi-pass membrane protein</topology>
    </subcellularLocation>
</comment>
<comment type="developmental stage">
    <text>Bacteroid (nitrogen-fixing endosymbiont).</text>
</comment>
<comment type="induction">
    <text>By low oxygen levels.</text>
</comment>
<comment type="miscellaneous">
    <text>This cytochrome oxidase is probably a cbb3-type.</text>
</comment>
<comment type="similarity">
    <text evidence="3">Belongs to the heme-copper respiratory oxidase family.</text>
</comment>
<name>FIXN_RHIME</name>
<keyword id="KW-1003">Cell membrane</keyword>
<keyword id="KW-0186">Copper</keyword>
<keyword id="KW-0249">Electron transport</keyword>
<keyword id="KW-0349">Heme</keyword>
<keyword id="KW-0408">Iron</keyword>
<keyword id="KW-0472">Membrane</keyword>
<keyword id="KW-0479">Metal-binding</keyword>
<keyword id="KW-0614">Plasmid</keyword>
<keyword id="KW-1185">Reference proteome</keyword>
<keyword id="KW-0679">Respiratory chain</keyword>
<keyword id="KW-1278">Translocase</keyword>
<keyword id="KW-0812">Transmembrane</keyword>
<keyword id="KW-1133">Transmembrane helix</keyword>
<keyword id="KW-0813">Transport</keyword>